<reference key="1">
    <citation type="journal article" date="2006" name="Mol. Microbiol.">
        <title>Role of pathogenicity island-associated integrases in the genome plasticity of uropathogenic Escherichia coli strain 536.</title>
        <authorList>
            <person name="Hochhut B."/>
            <person name="Wilde C."/>
            <person name="Balling G."/>
            <person name="Middendorf B."/>
            <person name="Dobrindt U."/>
            <person name="Brzuszkiewicz E."/>
            <person name="Gottschalk G."/>
            <person name="Carniel E."/>
            <person name="Hacker J."/>
        </authorList>
    </citation>
    <scope>NUCLEOTIDE SEQUENCE [LARGE SCALE GENOMIC DNA]</scope>
    <source>
        <strain>536 / UPEC</strain>
    </source>
</reference>
<sequence length="132" mass="14579">MSKTLNIIWQYLRAFVLIYACLYAGIFIASLLPVTIPGSIIGMLILFVLLALQILPAKWVNPGCYVLIRYMALLFVPIGVGVMQYFDLLRAQFGPVVVSCAVSTLVVFLVVSWSSQLVHGERKVVGQKGSEE</sequence>
<keyword id="KW-0997">Cell inner membrane</keyword>
<keyword id="KW-1003">Cell membrane</keyword>
<keyword id="KW-0472">Membrane</keyword>
<keyword id="KW-0812">Transmembrane</keyword>
<keyword id="KW-1133">Transmembrane helix</keyword>
<gene>
    <name evidence="1" type="primary">yohJ</name>
    <name type="ordered locus">ECP_2180</name>
</gene>
<name>YOHJ_ECOL5</name>
<organism>
    <name type="scientific">Escherichia coli O6:K15:H31 (strain 536 / UPEC)</name>
    <dbReference type="NCBI Taxonomy" id="362663"/>
    <lineage>
        <taxon>Bacteria</taxon>
        <taxon>Pseudomonadati</taxon>
        <taxon>Pseudomonadota</taxon>
        <taxon>Gammaproteobacteria</taxon>
        <taxon>Enterobacterales</taxon>
        <taxon>Enterobacteriaceae</taxon>
        <taxon>Escherichia</taxon>
    </lineage>
</organism>
<accession>Q0TFV0</accession>
<feature type="chain" id="PRO_1000065456" description="UPF0299 membrane protein YohJ">
    <location>
        <begin position="1"/>
        <end position="132"/>
    </location>
</feature>
<feature type="transmembrane region" description="Helical" evidence="1">
    <location>
        <begin position="7"/>
        <end position="27"/>
    </location>
</feature>
<feature type="transmembrane region" description="Helical" evidence="1">
    <location>
        <begin position="31"/>
        <end position="51"/>
    </location>
</feature>
<feature type="transmembrane region" description="Helical" evidence="1">
    <location>
        <begin position="63"/>
        <end position="83"/>
    </location>
</feature>
<feature type="transmembrane region" description="Helical" evidence="1">
    <location>
        <begin position="93"/>
        <end position="113"/>
    </location>
</feature>
<dbReference type="EMBL" id="CP000247">
    <property type="protein sequence ID" value="ABG70179.1"/>
    <property type="molecule type" value="Genomic_DNA"/>
</dbReference>
<dbReference type="RefSeq" id="WP_001295452.1">
    <property type="nucleotide sequence ID" value="NC_008253.1"/>
</dbReference>
<dbReference type="SMR" id="Q0TFV0"/>
<dbReference type="KEGG" id="ecp:ECP_2180"/>
<dbReference type="HOGENOM" id="CLU_113736_1_1_6"/>
<dbReference type="Proteomes" id="UP000009182">
    <property type="component" value="Chromosome"/>
</dbReference>
<dbReference type="GO" id="GO:0005886">
    <property type="term" value="C:plasma membrane"/>
    <property type="evidence" value="ECO:0007669"/>
    <property type="project" value="UniProtKB-SubCell"/>
</dbReference>
<dbReference type="HAMAP" id="MF_01144">
    <property type="entry name" value="UPF0299"/>
    <property type="match status" value="1"/>
</dbReference>
<dbReference type="InterPro" id="IPR005538">
    <property type="entry name" value="LrgA/CidA"/>
</dbReference>
<dbReference type="InterPro" id="IPR022957">
    <property type="entry name" value="Uncharacterised_UPF0299"/>
</dbReference>
<dbReference type="NCBIfam" id="NF002494">
    <property type="entry name" value="PRK01821.1"/>
    <property type="match status" value="1"/>
</dbReference>
<dbReference type="PANTHER" id="PTHR33931">
    <property type="entry name" value="HOLIN-LIKE PROTEIN CIDA-RELATED"/>
    <property type="match status" value="1"/>
</dbReference>
<dbReference type="PANTHER" id="PTHR33931:SF5">
    <property type="entry name" value="UPF0299 MEMBRANE PROTEIN YOHJ"/>
    <property type="match status" value="1"/>
</dbReference>
<dbReference type="Pfam" id="PF03788">
    <property type="entry name" value="LrgA"/>
    <property type="match status" value="1"/>
</dbReference>
<proteinExistence type="inferred from homology"/>
<evidence type="ECO:0000255" key="1">
    <source>
        <dbReference type="HAMAP-Rule" id="MF_01144"/>
    </source>
</evidence>
<comment type="subcellular location">
    <subcellularLocation>
        <location evidence="1">Cell inner membrane</location>
        <topology evidence="1">Multi-pass membrane protein</topology>
    </subcellularLocation>
</comment>
<comment type="similarity">
    <text evidence="1">Belongs to the UPF0299 family.</text>
</comment>
<protein>
    <recommendedName>
        <fullName evidence="1">UPF0299 membrane protein YohJ</fullName>
    </recommendedName>
</protein>